<accession>Q04C02</accession>
<comment type="function">
    <text evidence="1">Binds 16S rRNA, required for the assembly of 30S particles and may also be responsible for determining the conformation of the 16S rRNA at the A site.</text>
</comment>
<comment type="cofactor">
    <cofactor evidence="1">
        <name>Zn(2+)</name>
        <dbReference type="ChEBI" id="CHEBI:29105"/>
    </cofactor>
    <text evidence="1">Binds 1 zinc ion per subunit.</text>
</comment>
<comment type="subunit">
    <text evidence="1">Part of the 30S ribosomal subunit. Contacts proteins S3 and S10.</text>
</comment>
<comment type="similarity">
    <text evidence="1">Belongs to the universal ribosomal protein uS14 family. Zinc-binding uS14 subfamily.</text>
</comment>
<reference key="1">
    <citation type="journal article" date="2006" name="Proc. Natl. Acad. Sci. U.S.A.">
        <title>Comparative genomics of the lactic acid bacteria.</title>
        <authorList>
            <person name="Makarova K.S."/>
            <person name="Slesarev A."/>
            <person name="Wolf Y.I."/>
            <person name="Sorokin A."/>
            <person name="Mirkin B."/>
            <person name="Koonin E.V."/>
            <person name="Pavlov A."/>
            <person name="Pavlova N."/>
            <person name="Karamychev V."/>
            <person name="Polouchine N."/>
            <person name="Shakhova V."/>
            <person name="Grigoriev I."/>
            <person name="Lou Y."/>
            <person name="Rohksar D."/>
            <person name="Lucas S."/>
            <person name="Huang K."/>
            <person name="Goodstein D.M."/>
            <person name="Hawkins T."/>
            <person name="Plengvidhya V."/>
            <person name="Welker D."/>
            <person name="Hughes J."/>
            <person name="Goh Y."/>
            <person name="Benson A."/>
            <person name="Baldwin K."/>
            <person name="Lee J.-H."/>
            <person name="Diaz-Muniz I."/>
            <person name="Dosti B."/>
            <person name="Smeianov V."/>
            <person name="Wechter W."/>
            <person name="Barabote R."/>
            <person name="Lorca G."/>
            <person name="Altermann E."/>
            <person name="Barrangou R."/>
            <person name="Ganesan B."/>
            <person name="Xie Y."/>
            <person name="Rawsthorne H."/>
            <person name="Tamir D."/>
            <person name="Parker C."/>
            <person name="Breidt F."/>
            <person name="Broadbent J.R."/>
            <person name="Hutkins R."/>
            <person name="O'Sullivan D."/>
            <person name="Steele J."/>
            <person name="Unlu G."/>
            <person name="Saier M.H. Jr."/>
            <person name="Klaenhammer T."/>
            <person name="Richardson P."/>
            <person name="Kozyavkin S."/>
            <person name="Weimer B.C."/>
            <person name="Mills D.A."/>
        </authorList>
    </citation>
    <scope>NUCLEOTIDE SEQUENCE [LARGE SCALE GENOMIC DNA]</scope>
    <source>
        <strain>ATCC BAA-365 / Lb-18</strain>
    </source>
</reference>
<evidence type="ECO:0000255" key="1">
    <source>
        <dbReference type="HAMAP-Rule" id="MF_01364"/>
    </source>
</evidence>
<evidence type="ECO:0000256" key="2">
    <source>
        <dbReference type="SAM" id="MobiDB-lite"/>
    </source>
</evidence>
<evidence type="ECO:0000305" key="3"/>
<name>RS14Z_LACDB</name>
<gene>
    <name evidence="1" type="primary">rpsZ</name>
    <name evidence="1" type="synonym">rpsN</name>
    <name type="ordered locus">LBUL_0363</name>
</gene>
<protein>
    <recommendedName>
        <fullName evidence="1">Small ribosomal subunit protein uS14</fullName>
    </recommendedName>
    <alternativeName>
        <fullName evidence="3">30S ribosomal protein S14 type Z</fullName>
    </alternativeName>
</protein>
<sequence>MAKTSQKVRNHRPAKFSSREYTRCERCGRPHSVYRKFGLCRICLKELGHKGQIPGLKKASW</sequence>
<proteinExistence type="inferred from homology"/>
<feature type="chain" id="PRO_1000067944" description="Small ribosomal subunit protein uS14">
    <location>
        <begin position="1"/>
        <end position="61"/>
    </location>
</feature>
<feature type="region of interest" description="Disordered" evidence="2">
    <location>
        <begin position="1"/>
        <end position="20"/>
    </location>
</feature>
<feature type="compositionally biased region" description="Basic residues" evidence="2">
    <location>
        <begin position="1"/>
        <end position="14"/>
    </location>
</feature>
<feature type="binding site" evidence="1">
    <location>
        <position position="24"/>
    </location>
    <ligand>
        <name>Zn(2+)</name>
        <dbReference type="ChEBI" id="CHEBI:29105"/>
    </ligand>
</feature>
<feature type="binding site" evidence="1">
    <location>
        <position position="27"/>
    </location>
    <ligand>
        <name>Zn(2+)</name>
        <dbReference type="ChEBI" id="CHEBI:29105"/>
    </ligand>
</feature>
<feature type="binding site" evidence="1">
    <location>
        <position position="40"/>
    </location>
    <ligand>
        <name>Zn(2+)</name>
        <dbReference type="ChEBI" id="CHEBI:29105"/>
    </ligand>
</feature>
<feature type="binding site" evidence="1">
    <location>
        <position position="43"/>
    </location>
    <ligand>
        <name>Zn(2+)</name>
        <dbReference type="ChEBI" id="CHEBI:29105"/>
    </ligand>
</feature>
<keyword id="KW-0479">Metal-binding</keyword>
<keyword id="KW-0687">Ribonucleoprotein</keyword>
<keyword id="KW-0689">Ribosomal protein</keyword>
<keyword id="KW-0694">RNA-binding</keyword>
<keyword id="KW-0699">rRNA-binding</keyword>
<keyword id="KW-0862">Zinc</keyword>
<dbReference type="EMBL" id="CP000412">
    <property type="protein sequence ID" value="ABJ58020.1"/>
    <property type="molecule type" value="Genomic_DNA"/>
</dbReference>
<dbReference type="RefSeq" id="WP_002878192.1">
    <property type="nucleotide sequence ID" value="NC_008529.1"/>
</dbReference>
<dbReference type="SMR" id="Q04C02"/>
<dbReference type="KEGG" id="lbu:LBUL_0363"/>
<dbReference type="HOGENOM" id="CLU_139869_3_0_9"/>
<dbReference type="BioCyc" id="LDEL321956:LBUL_RS09840-MONOMER"/>
<dbReference type="GO" id="GO:0015935">
    <property type="term" value="C:small ribosomal subunit"/>
    <property type="evidence" value="ECO:0007669"/>
    <property type="project" value="TreeGrafter"/>
</dbReference>
<dbReference type="GO" id="GO:0019843">
    <property type="term" value="F:rRNA binding"/>
    <property type="evidence" value="ECO:0007669"/>
    <property type="project" value="UniProtKB-UniRule"/>
</dbReference>
<dbReference type="GO" id="GO:0003735">
    <property type="term" value="F:structural constituent of ribosome"/>
    <property type="evidence" value="ECO:0007669"/>
    <property type="project" value="InterPro"/>
</dbReference>
<dbReference type="GO" id="GO:0008270">
    <property type="term" value="F:zinc ion binding"/>
    <property type="evidence" value="ECO:0007669"/>
    <property type="project" value="UniProtKB-UniRule"/>
</dbReference>
<dbReference type="GO" id="GO:0006412">
    <property type="term" value="P:translation"/>
    <property type="evidence" value="ECO:0007669"/>
    <property type="project" value="UniProtKB-UniRule"/>
</dbReference>
<dbReference type="FunFam" id="4.10.830.10:FF:000001">
    <property type="entry name" value="30S ribosomal protein S14 type Z"/>
    <property type="match status" value="1"/>
</dbReference>
<dbReference type="Gene3D" id="4.10.830.10">
    <property type="entry name" value="30s Ribosomal Protein S14, Chain N"/>
    <property type="match status" value="1"/>
</dbReference>
<dbReference type="HAMAP" id="MF_01364_B">
    <property type="entry name" value="Ribosomal_uS14_2_B"/>
    <property type="match status" value="1"/>
</dbReference>
<dbReference type="InterPro" id="IPR001209">
    <property type="entry name" value="Ribosomal_uS14"/>
</dbReference>
<dbReference type="InterPro" id="IPR023053">
    <property type="entry name" value="Ribosomal_uS14_bact"/>
</dbReference>
<dbReference type="InterPro" id="IPR043140">
    <property type="entry name" value="Ribosomal_uS14_sf"/>
</dbReference>
<dbReference type="NCBIfam" id="NF005974">
    <property type="entry name" value="PRK08061.1"/>
    <property type="match status" value="1"/>
</dbReference>
<dbReference type="PANTHER" id="PTHR19836">
    <property type="entry name" value="30S RIBOSOMAL PROTEIN S14"/>
    <property type="match status" value="1"/>
</dbReference>
<dbReference type="PANTHER" id="PTHR19836:SF26">
    <property type="entry name" value="SMALL RIBOSOMAL SUBUNIT PROTEIN US14B"/>
    <property type="match status" value="1"/>
</dbReference>
<dbReference type="Pfam" id="PF00253">
    <property type="entry name" value="Ribosomal_S14"/>
    <property type="match status" value="1"/>
</dbReference>
<dbReference type="SUPFAM" id="SSF57716">
    <property type="entry name" value="Glucocorticoid receptor-like (DNA-binding domain)"/>
    <property type="match status" value="1"/>
</dbReference>
<organism>
    <name type="scientific">Lactobacillus delbrueckii subsp. bulgaricus (strain ATCC BAA-365 / Lb-18)</name>
    <dbReference type="NCBI Taxonomy" id="321956"/>
    <lineage>
        <taxon>Bacteria</taxon>
        <taxon>Bacillati</taxon>
        <taxon>Bacillota</taxon>
        <taxon>Bacilli</taxon>
        <taxon>Lactobacillales</taxon>
        <taxon>Lactobacillaceae</taxon>
        <taxon>Lactobacillus</taxon>
    </lineage>
</organism>